<gene>
    <name evidence="1" type="primary">trpB</name>
    <name type="ordered locus">P9215_01821</name>
</gene>
<sequence length="414" mass="45038">MVSTFSRKNQNYKKDDLNQPSKDGRFGKYGGQYVPETLMPALFELETAASNAWKDKLFVKELNHLLKTYVGRETPLYEAKRLTEYYKTKKAIPKIWLKREDLNHTGAHKINNALGQALLAIRMGKKRIIAETGAGQHGVATATVCARFGLKCIIYMGAEDIKRQSLNVFRMKLLGAEVKVVNSGTATLKDATSEAIRDWVSNVESTHYILGSVAGPHPFPKIVRDFHAVIGEETKKQCLESFGSLPDILLACVGGGSNAMGLFHPFVKETSVRLIGVEAAGGGVDTDKHAATITKGSVGILHGSMSLLLQDDNGQVQEAHSISAGLDYPGVGPEHSHLKDIGRAEYGSVTDQEALDSLRLVSELEGIIPALETSHAFAWLDKLCPTLEKDTHIVINCSGRGDKDVNTVASSLDI</sequence>
<proteinExistence type="inferred from homology"/>
<protein>
    <recommendedName>
        <fullName evidence="1">Tryptophan synthase beta chain</fullName>
        <ecNumber evidence="1">4.2.1.20</ecNumber>
    </recommendedName>
</protein>
<comment type="function">
    <text evidence="1">The beta subunit is responsible for the synthesis of L-tryptophan from indole and L-serine.</text>
</comment>
<comment type="catalytic activity">
    <reaction evidence="1">
        <text>(1S,2R)-1-C-(indol-3-yl)glycerol 3-phosphate + L-serine = D-glyceraldehyde 3-phosphate + L-tryptophan + H2O</text>
        <dbReference type="Rhea" id="RHEA:10532"/>
        <dbReference type="ChEBI" id="CHEBI:15377"/>
        <dbReference type="ChEBI" id="CHEBI:33384"/>
        <dbReference type="ChEBI" id="CHEBI:57912"/>
        <dbReference type="ChEBI" id="CHEBI:58866"/>
        <dbReference type="ChEBI" id="CHEBI:59776"/>
        <dbReference type="EC" id="4.2.1.20"/>
    </reaction>
</comment>
<comment type="cofactor">
    <cofactor evidence="1">
        <name>pyridoxal 5'-phosphate</name>
        <dbReference type="ChEBI" id="CHEBI:597326"/>
    </cofactor>
</comment>
<comment type="pathway">
    <text evidence="1">Amino-acid biosynthesis; L-tryptophan biosynthesis; L-tryptophan from chorismate: step 5/5.</text>
</comment>
<comment type="subunit">
    <text evidence="1">Tetramer of two alpha and two beta chains.</text>
</comment>
<comment type="similarity">
    <text evidence="1">Belongs to the TrpB family.</text>
</comment>
<dbReference type="EC" id="4.2.1.20" evidence="1"/>
<dbReference type="EMBL" id="CP000825">
    <property type="protein sequence ID" value="ABV49801.1"/>
    <property type="molecule type" value="Genomic_DNA"/>
</dbReference>
<dbReference type="RefSeq" id="WP_012006973.1">
    <property type="nucleotide sequence ID" value="NC_009840.1"/>
</dbReference>
<dbReference type="SMR" id="A8G2H0"/>
<dbReference type="STRING" id="93060.P9215_01821"/>
<dbReference type="KEGG" id="pmh:P9215_01821"/>
<dbReference type="eggNOG" id="COG0133">
    <property type="taxonomic scope" value="Bacteria"/>
</dbReference>
<dbReference type="HOGENOM" id="CLU_016734_3_1_3"/>
<dbReference type="OrthoDB" id="9766131at2"/>
<dbReference type="UniPathway" id="UPA00035">
    <property type="reaction ID" value="UER00044"/>
</dbReference>
<dbReference type="Proteomes" id="UP000002014">
    <property type="component" value="Chromosome"/>
</dbReference>
<dbReference type="GO" id="GO:0005737">
    <property type="term" value="C:cytoplasm"/>
    <property type="evidence" value="ECO:0007669"/>
    <property type="project" value="TreeGrafter"/>
</dbReference>
<dbReference type="GO" id="GO:0004834">
    <property type="term" value="F:tryptophan synthase activity"/>
    <property type="evidence" value="ECO:0007669"/>
    <property type="project" value="UniProtKB-UniRule"/>
</dbReference>
<dbReference type="CDD" id="cd06446">
    <property type="entry name" value="Trp-synth_B"/>
    <property type="match status" value="1"/>
</dbReference>
<dbReference type="FunFam" id="3.40.50.1100:FF:000001">
    <property type="entry name" value="Tryptophan synthase beta chain"/>
    <property type="match status" value="1"/>
</dbReference>
<dbReference type="FunFam" id="3.40.50.1100:FF:000004">
    <property type="entry name" value="Tryptophan synthase beta chain"/>
    <property type="match status" value="1"/>
</dbReference>
<dbReference type="Gene3D" id="3.40.50.1100">
    <property type="match status" value="2"/>
</dbReference>
<dbReference type="HAMAP" id="MF_00133">
    <property type="entry name" value="Trp_synth_beta"/>
    <property type="match status" value="1"/>
</dbReference>
<dbReference type="InterPro" id="IPR006653">
    <property type="entry name" value="Trp_synth_b_CS"/>
</dbReference>
<dbReference type="InterPro" id="IPR006654">
    <property type="entry name" value="Trp_synth_beta"/>
</dbReference>
<dbReference type="InterPro" id="IPR023026">
    <property type="entry name" value="Trp_synth_beta/beta-like"/>
</dbReference>
<dbReference type="InterPro" id="IPR001926">
    <property type="entry name" value="TrpB-like_PALP"/>
</dbReference>
<dbReference type="InterPro" id="IPR036052">
    <property type="entry name" value="TrpB-like_PALP_sf"/>
</dbReference>
<dbReference type="NCBIfam" id="TIGR00263">
    <property type="entry name" value="trpB"/>
    <property type="match status" value="1"/>
</dbReference>
<dbReference type="PANTHER" id="PTHR48077:SF3">
    <property type="entry name" value="TRYPTOPHAN SYNTHASE"/>
    <property type="match status" value="1"/>
</dbReference>
<dbReference type="PANTHER" id="PTHR48077">
    <property type="entry name" value="TRYPTOPHAN SYNTHASE-RELATED"/>
    <property type="match status" value="1"/>
</dbReference>
<dbReference type="Pfam" id="PF00291">
    <property type="entry name" value="PALP"/>
    <property type="match status" value="1"/>
</dbReference>
<dbReference type="PIRSF" id="PIRSF001413">
    <property type="entry name" value="Trp_syn_beta"/>
    <property type="match status" value="1"/>
</dbReference>
<dbReference type="SUPFAM" id="SSF53686">
    <property type="entry name" value="Tryptophan synthase beta subunit-like PLP-dependent enzymes"/>
    <property type="match status" value="1"/>
</dbReference>
<dbReference type="PROSITE" id="PS00168">
    <property type="entry name" value="TRP_SYNTHASE_BETA"/>
    <property type="match status" value="1"/>
</dbReference>
<feature type="chain" id="PRO_1000057863" description="Tryptophan synthase beta chain">
    <location>
        <begin position="1"/>
        <end position="414"/>
    </location>
</feature>
<feature type="region of interest" description="Disordered" evidence="2">
    <location>
        <begin position="1"/>
        <end position="26"/>
    </location>
</feature>
<feature type="compositionally biased region" description="Basic and acidic residues" evidence="2">
    <location>
        <begin position="12"/>
        <end position="26"/>
    </location>
</feature>
<feature type="modified residue" description="N6-(pyridoxal phosphate)lysine" evidence="1">
    <location>
        <position position="109"/>
    </location>
</feature>
<name>TRPB_PROM2</name>
<reference key="1">
    <citation type="journal article" date="2007" name="PLoS Genet.">
        <title>Patterns and implications of gene gain and loss in the evolution of Prochlorococcus.</title>
        <authorList>
            <person name="Kettler G.C."/>
            <person name="Martiny A.C."/>
            <person name="Huang K."/>
            <person name="Zucker J."/>
            <person name="Coleman M.L."/>
            <person name="Rodrigue S."/>
            <person name="Chen F."/>
            <person name="Lapidus A."/>
            <person name="Ferriera S."/>
            <person name="Johnson J."/>
            <person name="Steglich C."/>
            <person name="Church G.M."/>
            <person name="Richardson P."/>
            <person name="Chisholm S.W."/>
        </authorList>
    </citation>
    <scope>NUCLEOTIDE SEQUENCE [LARGE SCALE GENOMIC DNA]</scope>
    <source>
        <strain>MIT 9215</strain>
    </source>
</reference>
<evidence type="ECO:0000255" key="1">
    <source>
        <dbReference type="HAMAP-Rule" id="MF_00133"/>
    </source>
</evidence>
<evidence type="ECO:0000256" key="2">
    <source>
        <dbReference type="SAM" id="MobiDB-lite"/>
    </source>
</evidence>
<keyword id="KW-0028">Amino-acid biosynthesis</keyword>
<keyword id="KW-0057">Aromatic amino acid biosynthesis</keyword>
<keyword id="KW-0456">Lyase</keyword>
<keyword id="KW-0663">Pyridoxal phosphate</keyword>
<keyword id="KW-0822">Tryptophan biosynthesis</keyword>
<accession>A8G2H0</accession>
<organism>
    <name type="scientific">Prochlorococcus marinus (strain MIT 9215)</name>
    <dbReference type="NCBI Taxonomy" id="93060"/>
    <lineage>
        <taxon>Bacteria</taxon>
        <taxon>Bacillati</taxon>
        <taxon>Cyanobacteriota</taxon>
        <taxon>Cyanophyceae</taxon>
        <taxon>Synechococcales</taxon>
        <taxon>Prochlorococcaceae</taxon>
        <taxon>Prochlorococcus</taxon>
    </lineage>
</organism>